<protein>
    <recommendedName>
        <fullName evidence="1">Large ribosomal subunit protein uL2</fullName>
    </recommendedName>
    <alternativeName>
        <fullName evidence="3">50S ribosomal protein L2</fullName>
    </alternativeName>
</protein>
<proteinExistence type="inferred from homology"/>
<reference key="1">
    <citation type="journal article" date="2007" name="Nat. Biotechnol.">
        <title>Comparative analysis of the complete genome sequence of the plant growth-promoting bacterium Bacillus amyloliquefaciens FZB42.</title>
        <authorList>
            <person name="Chen X.H."/>
            <person name="Koumoutsi A."/>
            <person name="Scholz R."/>
            <person name="Eisenreich A."/>
            <person name="Schneider K."/>
            <person name="Heinemeyer I."/>
            <person name="Morgenstern B."/>
            <person name="Voss B."/>
            <person name="Hess W.R."/>
            <person name="Reva O."/>
            <person name="Junge H."/>
            <person name="Voigt B."/>
            <person name="Jungblut P.R."/>
            <person name="Vater J."/>
            <person name="Suessmuth R."/>
            <person name="Liesegang H."/>
            <person name="Strittmatter A."/>
            <person name="Gottschalk G."/>
            <person name="Borriss R."/>
        </authorList>
    </citation>
    <scope>NUCLEOTIDE SEQUENCE [LARGE SCALE GENOMIC DNA]</scope>
    <source>
        <strain>DSM 23117 / BGSC 10A6 / LMG 26770 / FZB42</strain>
    </source>
</reference>
<sequence>MAIKKYKPTSNGRRGMTTSDFAEITTDQPEKSLLAPLHKKGGRNNQGKLTVRHQGGGHKRQYRVIDFKRDKDGIPGRVATVEYDPNRSANIALINYVDGEKRYILAPKGIQVGTEIMSGPEADIKVGNALPLINIPVGTVVHNIELKPGKGGQLVRSAGTSAQVLGKEGKYVLVRLNSGEVRMILSACRASIGQVGNEQHELINVGKAGRSRWKGIRPTVRGSVMNPNDHPHGGGEGRAPIGRKSPMSPWGKPTLGFKTRKKKNKSDKFIVRRRKNK</sequence>
<dbReference type="EMBL" id="CP000560">
    <property type="protein sequence ID" value="ABS72567.1"/>
    <property type="molecule type" value="Genomic_DNA"/>
</dbReference>
<dbReference type="RefSeq" id="WP_003156470.1">
    <property type="nucleotide sequence ID" value="NC_009725.2"/>
</dbReference>
<dbReference type="SMR" id="A7Z0P1"/>
<dbReference type="GeneID" id="93079283"/>
<dbReference type="KEGG" id="bay:RBAM_001440"/>
<dbReference type="HOGENOM" id="CLU_036235_2_1_9"/>
<dbReference type="Proteomes" id="UP000001120">
    <property type="component" value="Chromosome"/>
</dbReference>
<dbReference type="GO" id="GO:0015934">
    <property type="term" value="C:large ribosomal subunit"/>
    <property type="evidence" value="ECO:0007669"/>
    <property type="project" value="InterPro"/>
</dbReference>
<dbReference type="GO" id="GO:0019843">
    <property type="term" value="F:rRNA binding"/>
    <property type="evidence" value="ECO:0007669"/>
    <property type="project" value="UniProtKB-UniRule"/>
</dbReference>
<dbReference type="GO" id="GO:0003735">
    <property type="term" value="F:structural constituent of ribosome"/>
    <property type="evidence" value="ECO:0007669"/>
    <property type="project" value="InterPro"/>
</dbReference>
<dbReference type="GO" id="GO:0016740">
    <property type="term" value="F:transferase activity"/>
    <property type="evidence" value="ECO:0007669"/>
    <property type="project" value="InterPro"/>
</dbReference>
<dbReference type="GO" id="GO:0002181">
    <property type="term" value="P:cytoplasmic translation"/>
    <property type="evidence" value="ECO:0007669"/>
    <property type="project" value="TreeGrafter"/>
</dbReference>
<dbReference type="FunFam" id="2.30.30.30:FF:000001">
    <property type="entry name" value="50S ribosomal protein L2"/>
    <property type="match status" value="1"/>
</dbReference>
<dbReference type="FunFam" id="2.40.50.140:FF:000003">
    <property type="entry name" value="50S ribosomal protein L2"/>
    <property type="match status" value="1"/>
</dbReference>
<dbReference type="FunFam" id="4.10.950.10:FF:000001">
    <property type="entry name" value="50S ribosomal protein L2"/>
    <property type="match status" value="1"/>
</dbReference>
<dbReference type="Gene3D" id="2.30.30.30">
    <property type="match status" value="1"/>
</dbReference>
<dbReference type="Gene3D" id="2.40.50.140">
    <property type="entry name" value="Nucleic acid-binding proteins"/>
    <property type="match status" value="1"/>
</dbReference>
<dbReference type="Gene3D" id="4.10.950.10">
    <property type="entry name" value="Ribosomal protein L2, domain 3"/>
    <property type="match status" value="1"/>
</dbReference>
<dbReference type="HAMAP" id="MF_01320_B">
    <property type="entry name" value="Ribosomal_uL2_B"/>
    <property type="match status" value="1"/>
</dbReference>
<dbReference type="InterPro" id="IPR012340">
    <property type="entry name" value="NA-bd_OB-fold"/>
</dbReference>
<dbReference type="InterPro" id="IPR014722">
    <property type="entry name" value="Rib_uL2_dom2"/>
</dbReference>
<dbReference type="InterPro" id="IPR002171">
    <property type="entry name" value="Ribosomal_uL2"/>
</dbReference>
<dbReference type="InterPro" id="IPR005880">
    <property type="entry name" value="Ribosomal_uL2_bac/org-type"/>
</dbReference>
<dbReference type="InterPro" id="IPR022669">
    <property type="entry name" value="Ribosomal_uL2_C"/>
</dbReference>
<dbReference type="InterPro" id="IPR022671">
    <property type="entry name" value="Ribosomal_uL2_CS"/>
</dbReference>
<dbReference type="InterPro" id="IPR014726">
    <property type="entry name" value="Ribosomal_uL2_dom3"/>
</dbReference>
<dbReference type="InterPro" id="IPR022666">
    <property type="entry name" value="Ribosomal_uL2_RNA-bd_dom"/>
</dbReference>
<dbReference type="InterPro" id="IPR008991">
    <property type="entry name" value="Translation_prot_SH3-like_sf"/>
</dbReference>
<dbReference type="NCBIfam" id="TIGR01171">
    <property type="entry name" value="rplB_bact"/>
    <property type="match status" value="1"/>
</dbReference>
<dbReference type="PANTHER" id="PTHR13691:SF5">
    <property type="entry name" value="LARGE RIBOSOMAL SUBUNIT PROTEIN UL2M"/>
    <property type="match status" value="1"/>
</dbReference>
<dbReference type="PANTHER" id="PTHR13691">
    <property type="entry name" value="RIBOSOMAL PROTEIN L2"/>
    <property type="match status" value="1"/>
</dbReference>
<dbReference type="Pfam" id="PF00181">
    <property type="entry name" value="Ribosomal_L2"/>
    <property type="match status" value="1"/>
</dbReference>
<dbReference type="Pfam" id="PF03947">
    <property type="entry name" value="Ribosomal_L2_C"/>
    <property type="match status" value="1"/>
</dbReference>
<dbReference type="PIRSF" id="PIRSF002158">
    <property type="entry name" value="Ribosomal_L2"/>
    <property type="match status" value="1"/>
</dbReference>
<dbReference type="SMART" id="SM01383">
    <property type="entry name" value="Ribosomal_L2"/>
    <property type="match status" value="1"/>
</dbReference>
<dbReference type="SMART" id="SM01382">
    <property type="entry name" value="Ribosomal_L2_C"/>
    <property type="match status" value="1"/>
</dbReference>
<dbReference type="SUPFAM" id="SSF50249">
    <property type="entry name" value="Nucleic acid-binding proteins"/>
    <property type="match status" value="1"/>
</dbReference>
<dbReference type="SUPFAM" id="SSF50104">
    <property type="entry name" value="Translation proteins SH3-like domain"/>
    <property type="match status" value="1"/>
</dbReference>
<dbReference type="PROSITE" id="PS00467">
    <property type="entry name" value="RIBOSOMAL_L2"/>
    <property type="match status" value="1"/>
</dbReference>
<evidence type="ECO:0000255" key="1">
    <source>
        <dbReference type="HAMAP-Rule" id="MF_01320"/>
    </source>
</evidence>
<evidence type="ECO:0000256" key="2">
    <source>
        <dbReference type="SAM" id="MobiDB-lite"/>
    </source>
</evidence>
<evidence type="ECO:0000305" key="3"/>
<name>RL2_BACVZ</name>
<accession>A7Z0P1</accession>
<organism>
    <name type="scientific">Bacillus velezensis (strain DSM 23117 / BGSC 10A6 / LMG 26770 / FZB42)</name>
    <name type="common">Bacillus amyloliquefaciens subsp. plantarum</name>
    <dbReference type="NCBI Taxonomy" id="326423"/>
    <lineage>
        <taxon>Bacteria</taxon>
        <taxon>Bacillati</taxon>
        <taxon>Bacillota</taxon>
        <taxon>Bacilli</taxon>
        <taxon>Bacillales</taxon>
        <taxon>Bacillaceae</taxon>
        <taxon>Bacillus</taxon>
        <taxon>Bacillus amyloliquefaciens group</taxon>
    </lineage>
</organism>
<gene>
    <name evidence="1" type="primary">rplB</name>
    <name type="ordered locus">RBAM_001440</name>
</gene>
<comment type="function">
    <text evidence="1">One of the primary rRNA binding proteins. Required for association of the 30S and 50S subunits to form the 70S ribosome, for tRNA binding and peptide bond formation. It has been suggested to have peptidyltransferase activity; this is somewhat controversial. Makes several contacts with the 16S rRNA in the 70S ribosome.</text>
</comment>
<comment type="subunit">
    <text evidence="1">Part of the 50S ribosomal subunit. Forms a bridge to the 30S subunit in the 70S ribosome.</text>
</comment>
<comment type="similarity">
    <text evidence="1">Belongs to the universal ribosomal protein uL2 family.</text>
</comment>
<feature type="chain" id="PRO_1000051930" description="Large ribosomal subunit protein uL2">
    <location>
        <begin position="1"/>
        <end position="277"/>
    </location>
</feature>
<feature type="region of interest" description="Disordered" evidence="2">
    <location>
        <begin position="36"/>
        <end position="58"/>
    </location>
</feature>
<feature type="region of interest" description="Disordered" evidence="2">
    <location>
        <begin position="219"/>
        <end position="277"/>
    </location>
</feature>
<feature type="compositionally biased region" description="Basic residues" evidence="2">
    <location>
        <begin position="258"/>
        <end position="277"/>
    </location>
</feature>
<keyword id="KW-0687">Ribonucleoprotein</keyword>
<keyword id="KW-0689">Ribosomal protein</keyword>
<keyword id="KW-0694">RNA-binding</keyword>
<keyword id="KW-0699">rRNA-binding</keyword>